<organism>
    <name type="scientific">Capsella bursa-pastoris</name>
    <name type="common">Shepherd's purse</name>
    <name type="synonym">Thlaspi bursa-pastoris</name>
    <dbReference type="NCBI Taxonomy" id="3719"/>
    <lineage>
        <taxon>Eukaryota</taxon>
        <taxon>Viridiplantae</taxon>
        <taxon>Streptophyta</taxon>
        <taxon>Embryophyta</taxon>
        <taxon>Tracheophyta</taxon>
        <taxon>Spermatophyta</taxon>
        <taxon>Magnoliopsida</taxon>
        <taxon>eudicotyledons</taxon>
        <taxon>Gunneridae</taxon>
        <taxon>Pentapetalae</taxon>
        <taxon>rosids</taxon>
        <taxon>malvids</taxon>
        <taxon>Brassicales</taxon>
        <taxon>Brassicaceae</taxon>
        <taxon>Camelineae</taxon>
        <taxon>Capsella</taxon>
    </lineage>
</organism>
<keyword id="KW-0150">Chloroplast</keyword>
<keyword id="KW-0472">Membrane</keyword>
<keyword id="KW-0602">Photosynthesis</keyword>
<keyword id="KW-0604">Photosystem II</keyword>
<keyword id="KW-0934">Plastid</keyword>
<keyword id="KW-0674">Reaction center</keyword>
<keyword id="KW-0793">Thylakoid</keyword>
<keyword id="KW-0812">Transmembrane</keyword>
<keyword id="KW-1133">Transmembrane helix</keyword>
<name>PSBL_CAPBU</name>
<accession>A4QKK7</accession>
<dbReference type="EMBL" id="AP009371">
    <property type="protein sequence ID" value="BAF50212.1"/>
    <property type="molecule type" value="Genomic_DNA"/>
</dbReference>
<dbReference type="RefSeq" id="YP_001123388.1">
    <property type="nucleotide sequence ID" value="NC_009270.1"/>
</dbReference>
<dbReference type="SMR" id="A4QKK7"/>
<dbReference type="GeneID" id="4961656"/>
<dbReference type="GO" id="GO:0009535">
    <property type="term" value="C:chloroplast thylakoid membrane"/>
    <property type="evidence" value="ECO:0007669"/>
    <property type="project" value="UniProtKB-SubCell"/>
</dbReference>
<dbReference type="GO" id="GO:0009539">
    <property type="term" value="C:photosystem II reaction center"/>
    <property type="evidence" value="ECO:0007669"/>
    <property type="project" value="InterPro"/>
</dbReference>
<dbReference type="GO" id="GO:0015979">
    <property type="term" value="P:photosynthesis"/>
    <property type="evidence" value="ECO:0007669"/>
    <property type="project" value="UniProtKB-UniRule"/>
</dbReference>
<dbReference type="HAMAP" id="MF_01317">
    <property type="entry name" value="PSII_PsbL"/>
    <property type="match status" value="1"/>
</dbReference>
<dbReference type="InterPro" id="IPR003372">
    <property type="entry name" value="PSII_PsbL"/>
</dbReference>
<dbReference type="InterPro" id="IPR037266">
    <property type="entry name" value="PSII_PsbL_sf"/>
</dbReference>
<dbReference type="NCBIfam" id="NF001972">
    <property type="entry name" value="PRK00753.1"/>
    <property type="match status" value="1"/>
</dbReference>
<dbReference type="Pfam" id="PF02419">
    <property type="entry name" value="PsbL"/>
    <property type="match status" value="1"/>
</dbReference>
<dbReference type="SUPFAM" id="SSF161017">
    <property type="entry name" value="Photosystem II reaction center protein L, PsbL"/>
    <property type="match status" value="1"/>
</dbReference>
<proteinExistence type="inferred from homology"/>
<protein>
    <recommendedName>
        <fullName evidence="1">Photosystem II reaction center protein L</fullName>
        <shortName evidence="1">PSII-L</shortName>
    </recommendedName>
</protein>
<sequence>MTQSNPNEQSVELNRTSLYWGLLLIFVLAVLFSNYFFN</sequence>
<evidence type="ECO:0000255" key="1">
    <source>
        <dbReference type="HAMAP-Rule" id="MF_01317"/>
    </source>
</evidence>
<geneLocation type="chloroplast"/>
<feature type="chain" id="PRO_0000306225" description="Photosystem II reaction center protein L">
    <location>
        <begin position="1"/>
        <end position="38"/>
    </location>
</feature>
<feature type="transmembrane region" description="Helical" evidence="1">
    <location>
        <begin position="17"/>
        <end position="37"/>
    </location>
</feature>
<reference key="1">
    <citation type="submission" date="2007-03" db="EMBL/GenBank/DDBJ databases">
        <title>Sequencing analysis of Capsella bursa-pastoris JO22 chloroplast DNA.</title>
        <authorList>
            <person name="Hosouchi T."/>
            <person name="Tsuruoka H."/>
            <person name="Kotani H."/>
        </authorList>
    </citation>
    <scope>NUCLEOTIDE SEQUENCE [LARGE SCALE GENOMIC DNA]</scope>
</reference>
<comment type="function">
    <text evidence="1">One of the components of the core complex of photosystem II (PSII). PSII is a light-driven water:plastoquinone oxidoreductase that uses light energy to abstract electrons from H(2)O, generating O(2) and a proton gradient subsequently used for ATP formation. It consists of a core antenna complex that captures photons, and an electron transfer chain that converts photonic excitation into a charge separation. This subunit is found at the monomer-monomer interface and is required for correct PSII assembly and/or dimerization.</text>
</comment>
<comment type="subunit">
    <text evidence="1">PSII is composed of 1 copy each of membrane proteins PsbA, PsbB, PsbC, PsbD, PsbE, PsbF, PsbH, PsbI, PsbJ, PsbK, PsbL, PsbM, PsbT, PsbX, PsbY, PsbZ, Psb30/Ycf12, at least 3 peripheral proteins of the oxygen-evolving complex and a large number of cofactors. It forms dimeric complexes.</text>
</comment>
<comment type="subcellular location">
    <subcellularLocation>
        <location evidence="1">Plastid</location>
        <location evidence="1">Chloroplast thylakoid membrane</location>
        <topology evidence="1">Single-pass membrane protein</topology>
    </subcellularLocation>
</comment>
<comment type="similarity">
    <text evidence="1">Belongs to the PsbL family.</text>
</comment>
<gene>
    <name evidence="1" type="primary">psbL</name>
</gene>